<keyword id="KW-0878">Amphibian defense peptide</keyword>
<keyword id="KW-0903">Direct protein sequencing</keyword>
<keyword id="KW-0964">Secreted</keyword>
<proteinExistence type="evidence at protein level"/>
<dbReference type="GO" id="GO:0005576">
    <property type="term" value="C:extracellular region"/>
    <property type="evidence" value="ECO:0000314"/>
    <property type="project" value="UniProtKB"/>
</dbReference>
<dbReference type="GO" id="GO:0006952">
    <property type="term" value="P:defense response"/>
    <property type="evidence" value="ECO:0000270"/>
    <property type="project" value="UniProtKB"/>
</dbReference>
<accession>P84831</accession>
<feature type="peptide" id="PRO_0000233924" description="Tryptophyllin-1">
    <location>
        <begin position="1"/>
        <end position="7"/>
    </location>
</feature>
<organism>
    <name type="scientific">Ascaphus truei</name>
    <name type="common">Coastal tailed frog</name>
    <dbReference type="NCBI Taxonomy" id="8439"/>
    <lineage>
        <taxon>Eukaryota</taxon>
        <taxon>Metazoa</taxon>
        <taxon>Chordata</taxon>
        <taxon>Craniata</taxon>
        <taxon>Vertebrata</taxon>
        <taxon>Euteleostomi</taxon>
        <taxon>Amphibia</taxon>
        <taxon>Batrachia</taxon>
        <taxon>Anura</taxon>
        <taxon>Ascaphidae</taxon>
        <taxon>Ascaphus</taxon>
    </lineage>
</organism>
<evidence type="ECO:0000269" key="1">
    <source>
    </source>
</evidence>
<evidence type="ECO:0000305" key="2"/>
<name>TY1_ASCTR</name>
<comment type="function">
    <text>Putative defense peptide.</text>
</comment>
<comment type="subcellular location">
    <subcellularLocation>
        <location evidence="1">Secreted</location>
    </subcellularLocation>
</comment>
<comment type="tissue specificity">
    <text evidence="1">Expressed by the skin glands.</text>
</comment>
<comment type="mass spectrometry" mass="852.5" method="MALDI" evidence="1"/>
<comment type="similarity">
    <text evidence="2">Belongs to the frog skin active peptide (FSAP) family. Tryptophillin subfamily.</text>
</comment>
<sequence length="7" mass="853">GPIPWQR</sequence>
<reference evidence="2" key="1">
    <citation type="journal article" date="2005" name="Gen. Comp. Endocrinol.">
        <title>Bradykinin-related peptides and tryptophyllins in the skin secretions of the most primitive extant frog, Ascaphus truei.</title>
        <authorList>
            <person name="Conlon J.M."/>
            <person name="Jouenne T."/>
            <person name="Cosette P."/>
            <person name="Cosquer D."/>
            <person name="Vaudry H."/>
            <person name="Taylor C.K."/>
            <person name="Abel P.W."/>
        </authorList>
    </citation>
    <scope>PROTEIN SEQUENCE</scope>
    <scope>SUBCELLULAR LOCATION</scope>
    <scope>TISSUE SPECIFICITY</scope>
    <scope>MASS SPECTROMETRY</scope>
    <source>
        <tissue evidence="1">Skin secretion</tissue>
    </source>
</reference>
<protein>
    <recommendedName>
        <fullName>Tryptophyllin-1</fullName>
    </recommendedName>
</protein>